<evidence type="ECO:0000255" key="1"/>
<evidence type="ECO:0000255" key="2">
    <source>
        <dbReference type="PROSITE-ProRule" id="PRU00258"/>
    </source>
</evidence>
<evidence type="ECO:0000255" key="3">
    <source>
        <dbReference type="PROSITE-ProRule" id="PRU01348"/>
    </source>
</evidence>
<evidence type="ECO:0000269" key="4">
    <source>
    </source>
</evidence>
<evidence type="ECO:0000303" key="5">
    <source>
    </source>
</evidence>
<evidence type="ECO:0000305" key="6"/>
<evidence type="ECO:0000305" key="7">
    <source>
    </source>
</evidence>
<accession>A0A2I2F262</accession>
<keyword id="KW-0436">Ligase</keyword>
<keyword id="KW-0511">Multifunctional enzyme</keyword>
<keyword id="KW-0560">Oxidoreductase</keyword>
<keyword id="KW-0596">Phosphopantetheine</keyword>
<keyword id="KW-0597">Phosphoprotein</keyword>
<keyword id="KW-1185">Reference proteome</keyword>
<keyword id="KW-0808">Transferase</keyword>
<comment type="function">
    <text evidence="4">PKS-NRPS hybrid synthetase; part of the gene cluster that mediates the biosynthesis of aspcandine, a pyrrolobenzazepine alkaloid (PubMed:35748771). Initially, the indoleamine 2,3-dioxygenase acdA accepts L-tryptophan and performs the oxidative opening of the indole ring to yield N'-formyl-L-kynurenine, which undergoes the spontaneous deformylation reaction to provide L-kynurenine (PubMed:35748771). The kynurenine 3-monooxygenase acdD then hydroxylates L-kynurenine to afford 3-hydroxy-L-kynurenine (PubMed:35748771). 3-hydroxy-L-kynurenine is activated by the A domain of the NRPS-PKS acdB and subsequently loaded onto the enzyme (PubMed:35748771). The KS domain conducts the decarboxylative condensation of the 3-hydroxy-L-kynurenyl and malonyl moieties, and subsequent nucleophilic attacks by the two amino groups would occur nonenzymatically at two distinct positions, achieving the chain release and the construction of the tricyclic system (PubMed:35748771). Finally, a dehydration reaction completes the biosynthesis to yield aspcandine (PubMed:35748771).</text>
</comment>
<comment type="cofactor">
    <cofactor evidence="2">
        <name>pantetheine 4'-phosphate</name>
        <dbReference type="ChEBI" id="CHEBI:47942"/>
    </cofactor>
</comment>
<comment type="pathway">
    <text evidence="4">Secondary metabolite biosynthesis.</text>
</comment>
<comment type="domain">
    <text evidence="4">The architecture of acdB is the following one: adenylation (A), phosphopantetheine-binding/thiolation (T), beta-ketoacyl synthase (KS), malonyl-CoA:ACP transacylase (MAT), ketoreductase (KR) domain, and thioester reductase (TE) domains. The 2 reductase domains, ketoeductase and thioester reductase, seem not to be active since they are not required for V biosythesis.</text>
</comment>
<comment type="similarity">
    <text evidence="6">In the C-terminal section; belongs to the NRP synthetase family.</text>
</comment>
<dbReference type="EC" id="2.3.1.-" evidence="4"/>
<dbReference type="EMBL" id="KZ559173">
    <property type="protein sequence ID" value="PLB34720.1"/>
    <property type="molecule type" value="Genomic_DNA"/>
</dbReference>
<dbReference type="SMR" id="A0A2I2F262"/>
<dbReference type="STRING" id="41067.A0A2I2F262"/>
<dbReference type="OrthoDB" id="5334845at2759"/>
<dbReference type="Proteomes" id="UP000234585">
    <property type="component" value="Unassembled WGS sequence"/>
</dbReference>
<dbReference type="GO" id="GO:0005737">
    <property type="term" value="C:cytoplasm"/>
    <property type="evidence" value="ECO:0007669"/>
    <property type="project" value="TreeGrafter"/>
</dbReference>
<dbReference type="GO" id="GO:0005886">
    <property type="term" value="C:plasma membrane"/>
    <property type="evidence" value="ECO:0007669"/>
    <property type="project" value="TreeGrafter"/>
</dbReference>
<dbReference type="GO" id="GO:0004312">
    <property type="term" value="F:fatty acid synthase activity"/>
    <property type="evidence" value="ECO:0007669"/>
    <property type="project" value="TreeGrafter"/>
</dbReference>
<dbReference type="GO" id="GO:0016874">
    <property type="term" value="F:ligase activity"/>
    <property type="evidence" value="ECO:0007669"/>
    <property type="project" value="UniProtKB-KW"/>
</dbReference>
<dbReference type="GO" id="GO:0016491">
    <property type="term" value="F:oxidoreductase activity"/>
    <property type="evidence" value="ECO:0007669"/>
    <property type="project" value="UniProtKB-KW"/>
</dbReference>
<dbReference type="GO" id="GO:0031177">
    <property type="term" value="F:phosphopantetheine binding"/>
    <property type="evidence" value="ECO:0007669"/>
    <property type="project" value="InterPro"/>
</dbReference>
<dbReference type="GO" id="GO:0006633">
    <property type="term" value="P:fatty acid biosynthetic process"/>
    <property type="evidence" value="ECO:0007669"/>
    <property type="project" value="TreeGrafter"/>
</dbReference>
<dbReference type="CDD" id="cd05930">
    <property type="entry name" value="A_NRPS"/>
    <property type="match status" value="1"/>
</dbReference>
<dbReference type="CDD" id="cd08956">
    <property type="entry name" value="KR_3_FAS_SDR_x"/>
    <property type="match status" value="1"/>
</dbReference>
<dbReference type="CDD" id="cd00833">
    <property type="entry name" value="PKS"/>
    <property type="match status" value="1"/>
</dbReference>
<dbReference type="FunFam" id="3.40.50.980:FF:000001">
    <property type="entry name" value="Non-ribosomal peptide synthetase"/>
    <property type="match status" value="1"/>
</dbReference>
<dbReference type="FunFam" id="3.40.47.10:FF:000019">
    <property type="entry name" value="Polyketide synthase type I"/>
    <property type="match status" value="1"/>
</dbReference>
<dbReference type="Gene3D" id="3.30.300.30">
    <property type="match status" value="1"/>
</dbReference>
<dbReference type="Gene3D" id="3.30.70.3290">
    <property type="match status" value="1"/>
</dbReference>
<dbReference type="Gene3D" id="3.40.47.10">
    <property type="match status" value="1"/>
</dbReference>
<dbReference type="Gene3D" id="3.40.50.980">
    <property type="match status" value="2"/>
</dbReference>
<dbReference type="Gene3D" id="1.10.1200.10">
    <property type="entry name" value="ACP-like"/>
    <property type="match status" value="2"/>
</dbReference>
<dbReference type="Gene3D" id="2.30.38.10">
    <property type="entry name" value="Luciferase, Domain 3"/>
    <property type="match status" value="1"/>
</dbReference>
<dbReference type="Gene3D" id="3.40.366.10">
    <property type="entry name" value="Malonyl-Coenzyme A Acyl Carrier Protein, domain 2"/>
    <property type="match status" value="1"/>
</dbReference>
<dbReference type="Gene3D" id="3.40.50.720">
    <property type="entry name" value="NAD(P)-binding Rossmann-like Domain"/>
    <property type="match status" value="2"/>
</dbReference>
<dbReference type="InterPro" id="IPR010071">
    <property type="entry name" value="AA_adenyl_dom"/>
</dbReference>
<dbReference type="InterPro" id="IPR001227">
    <property type="entry name" value="Ac_transferase_dom_sf"/>
</dbReference>
<dbReference type="InterPro" id="IPR036736">
    <property type="entry name" value="ACP-like_sf"/>
</dbReference>
<dbReference type="InterPro" id="IPR014043">
    <property type="entry name" value="Acyl_transferase_dom"/>
</dbReference>
<dbReference type="InterPro" id="IPR016035">
    <property type="entry name" value="Acyl_Trfase/lysoPLipase"/>
</dbReference>
<dbReference type="InterPro" id="IPR025110">
    <property type="entry name" value="AMP-bd_C"/>
</dbReference>
<dbReference type="InterPro" id="IPR045851">
    <property type="entry name" value="AMP-bd_C_sf"/>
</dbReference>
<dbReference type="InterPro" id="IPR020845">
    <property type="entry name" value="AMP-binding_CS"/>
</dbReference>
<dbReference type="InterPro" id="IPR000873">
    <property type="entry name" value="AMP-dep_synth/lig_dom"/>
</dbReference>
<dbReference type="InterPro" id="IPR013120">
    <property type="entry name" value="Far_NAD-bd"/>
</dbReference>
<dbReference type="InterPro" id="IPR014031">
    <property type="entry name" value="Ketoacyl_synth_C"/>
</dbReference>
<dbReference type="InterPro" id="IPR014030">
    <property type="entry name" value="Ketoacyl_synth_N"/>
</dbReference>
<dbReference type="InterPro" id="IPR016036">
    <property type="entry name" value="Malonyl_transacylase_ACP-bd"/>
</dbReference>
<dbReference type="InterPro" id="IPR036291">
    <property type="entry name" value="NAD(P)-bd_dom_sf"/>
</dbReference>
<dbReference type="InterPro" id="IPR032821">
    <property type="entry name" value="PKS_assoc"/>
</dbReference>
<dbReference type="InterPro" id="IPR020841">
    <property type="entry name" value="PKS_Beta-ketoAc_synthase_dom"/>
</dbReference>
<dbReference type="InterPro" id="IPR013968">
    <property type="entry name" value="PKS_KR"/>
</dbReference>
<dbReference type="InterPro" id="IPR050091">
    <property type="entry name" value="PKS_NRPS_Biosynth_Enz"/>
</dbReference>
<dbReference type="InterPro" id="IPR020806">
    <property type="entry name" value="PKS_PP-bd"/>
</dbReference>
<dbReference type="InterPro" id="IPR009081">
    <property type="entry name" value="PP-bd_ACP"/>
</dbReference>
<dbReference type="InterPro" id="IPR006162">
    <property type="entry name" value="Ppantetheine_attach_site"/>
</dbReference>
<dbReference type="InterPro" id="IPR016039">
    <property type="entry name" value="Thiolase-like"/>
</dbReference>
<dbReference type="NCBIfam" id="TIGR01733">
    <property type="entry name" value="AA-adenyl-dom"/>
    <property type="match status" value="1"/>
</dbReference>
<dbReference type="PANTHER" id="PTHR43775">
    <property type="entry name" value="FATTY ACID SYNTHASE"/>
    <property type="match status" value="1"/>
</dbReference>
<dbReference type="PANTHER" id="PTHR43775:SF37">
    <property type="entry name" value="SI:DKEY-61P9.11"/>
    <property type="match status" value="1"/>
</dbReference>
<dbReference type="Pfam" id="PF00698">
    <property type="entry name" value="Acyl_transf_1"/>
    <property type="match status" value="1"/>
</dbReference>
<dbReference type="Pfam" id="PF00501">
    <property type="entry name" value="AMP-binding"/>
    <property type="match status" value="1"/>
</dbReference>
<dbReference type="Pfam" id="PF13193">
    <property type="entry name" value="AMP-binding_C"/>
    <property type="match status" value="1"/>
</dbReference>
<dbReference type="Pfam" id="PF16197">
    <property type="entry name" value="KAsynt_C_assoc"/>
    <property type="match status" value="1"/>
</dbReference>
<dbReference type="Pfam" id="PF00109">
    <property type="entry name" value="ketoacyl-synt"/>
    <property type="match status" value="1"/>
</dbReference>
<dbReference type="Pfam" id="PF02801">
    <property type="entry name" value="Ketoacyl-synt_C"/>
    <property type="match status" value="1"/>
</dbReference>
<dbReference type="Pfam" id="PF08659">
    <property type="entry name" value="KR"/>
    <property type="match status" value="1"/>
</dbReference>
<dbReference type="Pfam" id="PF07993">
    <property type="entry name" value="NAD_binding_4"/>
    <property type="match status" value="1"/>
</dbReference>
<dbReference type="Pfam" id="PF00550">
    <property type="entry name" value="PP-binding"/>
    <property type="match status" value="2"/>
</dbReference>
<dbReference type="SMART" id="SM00827">
    <property type="entry name" value="PKS_AT"/>
    <property type="match status" value="1"/>
</dbReference>
<dbReference type="SMART" id="SM00822">
    <property type="entry name" value="PKS_KR"/>
    <property type="match status" value="1"/>
</dbReference>
<dbReference type="SMART" id="SM00825">
    <property type="entry name" value="PKS_KS"/>
    <property type="match status" value="1"/>
</dbReference>
<dbReference type="SMART" id="SM00823">
    <property type="entry name" value="PKS_PP"/>
    <property type="match status" value="2"/>
</dbReference>
<dbReference type="SUPFAM" id="SSF56801">
    <property type="entry name" value="Acetyl-CoA synthetase-like"/>
    <property type="match status" value="1"/>
</dbReference>
<dbReference type="SUPFAM" id="SSF47336">
    <property type="entry name" value="ACP-like"/>
    <property type="match status" value="2"/>
</dbReference>
<dbReference type="SUPFAM" id="SSF52151">
    <property type="entry name" value="FabD/lysophospholipase-like"/>
    <property type="match status" value="1"/>
</dbReference>
<dbReference type="SUPFAM" id="SSF51735">
    <property type="entry name" value="NAD(P)-binding Rossmann-fold domains"/>
    <property type="match status" value="3"/>
</dbReference>
<dbReference type="SUPFAM" id="SSF55048">
    <property type="entry name" value="Probable ACP-binding domain of malonyl-CoA ACP transacylase"/>
    <property type="match status" value="1"/>
</dbReference>
<dbReference type="SUPFAM" id="SSF53901">
    <property type="entry name" value="Thiolase-like"/>
    <property type="match status" value="1"/>
</dbReference>
<dbReference type="PROSITE" id="PS00455">
    <property type="entry name" value="AMP_BINDING"/>
    <property type="match status" value="1"/>
</dbReference>
<dbReference type="PROSITE" id="PS50075">
    <property type="entry name" value="CARRIER"/>
    <property type="match status" value="2"/>
</dbReference>
<dbReference type="PROSITE" id="PS52004">
    <property type="entry name" value="KS3_2"/>
    <property type="match status" value="1"/>
</dbReference>
<dbReference type="PROSITE" id="PS00012">
    <property type="entry name" value="PHOSPHOPANTETHEINE"/>
    <property type="match status" value="1"/>
</dbReference>
<sequence>MTIRSAEEDPRRLLEEFNLTDNAATLGSCFPWLFEQAAHAHFDRTAVICGDAQLTYGTLNGRANIIAQILVNRNIGSGDVVGVALDRSVDLLVVLLAVMKSGAAYVPIDPALPAQRILQMMNDTAPKVVLTDHSVLDTLSLWNGPQLSIEELRVEMSLNPANTPNIRRDIQPEDLAYVIYTSGSTGKPKGVEISHGAVANFVLSMQVVPGCNKHDRILAVSTISFDMTLWDLYAPLACGACTVIAQTHEQKDAEALIELIRENGITSMLATPATWQMLFHAGWQGQPRLKTIKTGGESLSQHLSERLLAAAEKVYNGYGPTEATGCVSLWPVQAGEEVLIGTPIANTKLYVLDADLSPMPLGCAGELYIGGAGVACGYRNNPELTRSRFLANPFHEGLMYRTGDLACLVTPKKLKFLGRADSQVKIRGQRLELGEVEAAITSHGDVAHAIVINREGQLAAYCVRDLHRAVEIDPAKVSLSSILRPWLVERLPAYMVPSFIMEVDHIPLTLNGKVDHKSLPAPMAETTTTNQPATELERDIAAIWSTVLGHDHIGRDDNFFQIGGDSVRLVRMQADLKKLLGRSVPITVLFQQYTIKSLAGYLMDMDRPIPADESIHQPNPKPHHVDSDDIAVVSMACRLPGGIETPEAFWELLERGGDATTDVPPERWDADALYDPDPDAPGKSYCRRGGFVPSFGAFDTKFFHLLPNEARALDPAQYIMLETSWEAFERAGYRTQQLRGSSTGVFIGVNNTVAHGSPSTHAHGLADLQGYTGTGTAGGTMSGRVSYVLGLEGPSLTIDTACSSSLVATHLACTALRQGECDMAVTGAVTHLPAPGLHVEFSRLRGVAPDGRCRAFAADAQGIGIAEGAAVVVLKRLSDARRDGDTIYGVLRGSAVNHGGQGAAGLTVPSGAAQERVIRAALASSRLLPDDIDYIEAHGTGTRLGDPIEGMALTEVFGGSRSNTSQSLWIGSSKTNVGHTQAAAGLVGLIKVLLALRYNTLPPTLHITQPTPAIDWHRANMAPVQTKQHWLAGGERPRRAGVSSFGIGGTNAHVIVEEPPRCSVSTESTLYVPLPHPVPFLLSSPVEAGLQPQADKLHMYLSQSMSKGDPGNIAYSLATTRNHFPQRIVLLAQDTTDLVAQLVDLPRKAIVSPRGSSPEPRLAMLFAGQGSQQLGRGKTLAKHYRVFRETLEEIATQFYGILQEPLLDVMHAAADSALAALLQRSDYAQPALFALEVALWRLWQSWGVQPDMVLGHSIGELTAAHIAGVMDLPDACRLVAARGRLMETLPCHGGMASLEASASEVSLAITTLDLGGQVGIAAYNTPSQTVISGDRDALDILIAYFSGQDRQSKTLPVSRAFHSHHIDGMLTAYQAVVQSVQLNAPSLPIVSTLTGRRVEPCELQQPTYWVRQAREAVRYSDGIQALADHGMNVFLELGPQSVLCGMGAAVLDGSENRTTWLPSLAPNKDEVVAIQEILARLHVQHVPVNWQGYFQPFGCRRLELPTYAFQRERVHSGTKERDHGKREARPQASAFYDKVFQIDWRPFAIQHVQPRGIWGLQCSSGYVKWAEAVRAALFQGGIQCILLPSLSLQGTKTLDGVLCLWDSHGDVISQVHEFAAQGLTQLKEAANTRPSLPLVWLTSQAVGTARDDQPLALGAGLLWGLMRTARNEHPERSLRLIDLGRDDQNRVDASGLAPLLMLHTEPECALRQGMVLVPRMQRMELEFGDATQTLLRSDGAVLITGGLSGLGARIAEWLASTHGIRDLVLTSRRGMDTPGAATLVRRLAHLGTKTTVVSGDTTDPSHLNSLLSMFSHARPLRGVVHAAGVRDTSMLGTSTPQRCVGALAPKVIGAWYLHQFTRTRNDLDLFVVVSSFWGVMGTSGHATDAAANAVLDSLVYTRQSQGLPAVCVAYGPLPDINIPPGLLPTIRDQLQQMGIKTLTPDDTISLFELAARRSHGVTVAAALDLHQLQSYSSQRGGIPALLRLLLDRDTPQKHQGPALYDVLRRTAPDQRREILLRTIQEAVATTLGFSQPDEVDIHRSLPDMGIDSLGALLVRNQLAGLLGQALPANIVFIHPSLDELSRYLLPQLVDSNRDASSVAEPDMASASTAADVSGLNLMAIRKGCVDSSFTFDNALPKPTPQSVFVTGATEFVGAFLVHELLDQGKVTYCLVHAHSIDHARQQIVSWLQDYNLWKIGYAELLRPLVGDVCQVRLGLDESVFDDLAHRVDTIYHASCLVDWMRPLDDYIGPNVTSTHEVLRLASTSHAKTIHYLSTSATLPYHLGYDIPEDALTYGYAMSKLMAERMVIAARCRGAQAFIYRLPFITASATSGHFQLNNRDFLHNLISGSLEMGCFPSLDADLSLVFPVDYVCRTIITLAHTTPGSTHIRYDYDFKNPQAQSFDHYFNLLATVGKDLESLAFSTWRQRALAYAAAKPASSLTSIADILKNSTEEAVVKMFQCPPIVTPFLGGEEFPVPSVNDQSVRKYLHRMDLTL</sequence>
<feature type="chain" id="PRO_0000456692" description="PKS-NRPS hybrid synthetase acdB">
    <location>
        <begin position="1"/>
        <end position="2498"/>
    </location>
</feature>
<feature type="domain" description="Carrier 1" evidence="2 7">
    <location>
        <begin position="531"/>
        <end position="606"/>
    </location>
</feature>
<feature type="domain" description="Ketosynthase family 3 (KS3)" evidence="3 7">
    <location>
        <begin position="627"/>
        <end position="1058"/>
    </location>
</feature>
<feature type="domain" description="Carrier 2" evidence="2 7">
    <location>
        <begin position="2017"/>
        <end position="2092"/>
    </location>
</feature>
<feature type="region of interest" description="Adenylation (A) domain" evidence="1 7">
    <location>
        <begin position="34"/>
        <end position="427"/>
    </location>
</feature>
<feature type="region of interest" description="Malonyl-CoA:ACP transacylase (MAT) domain" evidence="1 7">
    <location>
        <begin position="1165"/>
        <end position="1485"/>
    </location>
</feature>
<feature type="region of interest" description="Ketoreductase (KR) domain" evidence="1 7">
    <location>
        <begin position="1739"/>
        <end position="1917"/>
    </location>
</feature>
<feature type="region of interest" description="Thioester reductase (TE) domain" evidence="1 7">
    <location>
        <begin position="2149"/>
        <end position="2378"/>
    </location>
</feature>
<feature type="active site" description="For beta-ketoacyl synthase activity" evidence="3">
    <location>
        <position position="802"/>
    </location>
</feature>
<feature type="active site" description="For beta-ketoacyl synthase activity" evidence="3">
    <location>
        <position position="938"/>
    </location>
</feature>
<feature type="active site" description="For beta-ketoacyl synthase activity" evidence="3">
    <location>
        <position position="979"/>
    </location>
</feature>
<feature type="modified residue" description="O-(pantetheine 4'-phosphoryl)serine" evidence="2">
    <location>
        <position position="566"/>
    </location>
</feature>
<feature type="modified residue" description="O-(pantetheine 4'-phosphoryl)serine" evidence="2">
    <location>
        <position position="2052"/>
    </location>
</feature>
<organism>
    <name type="scientific">Aspergillus candidus</name>
    <dbReference type="NCBI Taxonomy" id="41067"/>
    <lineage>
        <taxon>Eukaryota</taxon>
        <taxon>Fungi</taxon>
        <taxon>Dikarya</taxon>
        <taxon>Ascomycota</taxon>
        <taxon>Pezizomycotina</taxon>
        <taxon>Eurotiomycetes</taxon>
        <taxon>Eurotiomycetidae</taxon>
        <taxon>Eurotiales</taxon>
        <taxon>Aspergillaceae</taxon>
        <taxon>Aspergillus</taxon>
        <taxon>Aspergillus subgen. Circumdati</taxon>
    </lineage>
</organism>
<name>ACDB_ASPCN</name>
<protein>
    <recommendedName>
        <fullName evidence="5">PKS-NRPS hybrid synthetase acdB</fullName>
        <ecNumber evidence="4">2.3.1.-</ecNumber>
    </recommendedName>
    <alternativeName>
        <fullName evidence="5">Aspcandine biosynthesis gene cluster protein B</fullName>
    </alternativeName>
</protein>
<reference key="1">
    <citation type="submission" date="2017-12" db="EMBL/GenBank/DDBJ databases">
        <authorList>
            <consortium name="DOE Joint Genome Institute"/>
            <person name="Haridas S."/>
            <person name="Kjaerbolling I."/>
            <person name="Vesth T.C."/>
            <person name="Frisvad J.C."/>
            <person name="Nybo J.L."/>
            <person name="Theobald S."/>
            <person name="Kuo A."/>
            <person name="Bowyer P."/>
            <person name="Matsuda Y."/>
            <person name="Mondo S."/>
            <person name="Lyhne E.K."/>
            <person name="Kogle M.E."/>
            <person name="Clum A."/>
            <person name="Lipzen A."/>
            <person name="Salamov A."/>
            <person name="Ngan C.Y."/>
            <person name="Daum C."/>
            <person name="Chiniquy J."/>
            <person name="Barry K."/>
            <person name="LaButti K."/>
            <person name="Simmons B.A."/>
            <person name="Magnuson J.K."/>
            <person name="Mortensen U.H."/>
            <person name="Larsen T.O."/>
            <person name="Grigoriev I.V."/>
            <person name="Baker S.E."/>
            <person name="Andersen M.R."/>
            <person name="Nordberg H.P."/>
            <person name="Cantor M.N."/>
            <person name="Hua S.X."/>
        </authorList>
    </citation>
    <scope>NUCLEOTIDE SEQUENCE [LARGE SCALE GENOMIC DNA]</scope>
    <source>
        <strain>CBS 102.13</strain>
    </source>
</reference>
<reference key="2">
    <citation type="journal article" date="2022" name="Org. Lett.">
        <title>Aspcandine: A Pyrrolobenzazepine Alkaloid Synthesized by a Fungal Nonribosomal Peptide Synthetase-Polyketide Synthase Hybrid.</title>
        <authorList>
            <person name="Chen L."/>
            <person name="Tang J.W."/>
            <person name="Liu Y.Y."/>
            <person name="Matsuda Y."/>
        </authorList>
    </citation>
    <scope>FUNCTION</scope>
    <scope>DOMAIN</scope>
    <scope>CATALYTIC ACTIVITY</scope>
    <scope>PATHWAY</scope>
</reference>
<proteinExistence type="evidence at protein level"/>
<gene>
    <name evidence="5" type="primary">acdB</name>
    <name type="ORF">BDW47DRAFT_71441</name>
</gene>